<name>RL33_BORBR</name>
<reference key="1">
    <citation type="journal article" date="2003" name="Nat. Genet.">
        <title>Comparative analysis of the genome sequences of Bordetella pertussis, Bordetella parapertussis and Bordetella bronchiseptica.</title>
        <authorList>
            <person name="Parkhill J."/>
            <person name="Sebaihia M."/>
            <person name="Preston A."/>
            <person name="Murphy L.D."/>
            <person name="Thomson N.R."/>
            <person name="Harris D.E."/>
            <person name="Holden M.T.G."/>
            <person name="Churcher C.M."/>
            <person name="Bentley S.D."/>
            <person name="Mungall K.L."/>
            <person name="Cerdeno-Tarraga A.-M."/>
            <person name="Temple L."/>
            <person name="James K.D."/>
            <person name="Harris B."/>
            <person name="Quail M.A."/>
            <person name="Achtman M."/>
            <person name="Atkin R."/>
            <person name="Baker S."/>
            <person name="Basham D."/>
            <person name="Bason N."/>
            <person name="Cherevach I."/>
            <person name="Chillingworth T."/>
            <person name="Collins M."/>
            <person name="Cronin A."/>
            <person name="Davis P."/>
            <person name="Doggett J."/>
            <person name="Feltwell T."/>
            <person name="Goble A."/>
            <person name="Hamlin N."/>
            <person name="Hauser H."/>
            <person name="Holroyd S."/>
            <person name="Jagels K."/>
            <person name="Leather S."/>
            <person name="Moule S."/>
            <person name="Norberczak H."/>
            <person name="O'Neil S."/>
            <person name="Ormond D."/>
            <person name="Price C."/>
            <person name="Rabbinowitsch E."/>
            <person name="Rutter S."/>
            <person name="Sanders M."/>
            <person name="Saunders D."/>
            <person name="Seeger K."/>
            <person name="Sharp S."/>
            <person name="Simmonds M."/>
            <person name="Skelton J."/>
            <person name="Squares R."/>
            <person name="Squares S."/>
            <person name="Stevens K."/>
            <person name="Unwin L."/>
            <person name="Whitehead S."/>
            <person name="Barrell B.G."/>
            <person name="Maskell D.J."/>
        </authorList>
    </citation>
    <scope>NUCLEOTIDE SEQUENCE [LARGE SCALE GENOMIC DNA]</scope>
    <source>
        <strain>ATCC BAA-588 / NCTC 13252 / RB50</strain>
    </source>
</reference>
<sequence length="55" mass="6438">MAKGIREKIKLESTAGTGHFYTTTKNKRNMPEKMLIKKFDPVARKHVDYKETKLK</sequence>
<keyword id="KW-0687">Ribonucleoprotein</keyword>
<keyword id="KW-0689">Ribosomal protein</keyword>
<accession>Q7WH38</accession>
<organism>
    <name type="scientific">Bordetella bronchiseptica (strain ATCC BAA-588 / NCTC 13252 / RB50)</name>
    <name type="common">Alcaligenes bronchisepticus</name>
    <dbReference type="NCBI Taxonomy" id="257310"/>
    <lineage>
        <taxon>Bacteria</taxon>
        <taxon>Pseudomonadati</taxon>
        <taxon>Pseudomonadota</taxon>
        <taxon>Betaproteobacteria</taxon>
        <taxon>Burkholderiales</taxon>
        <taxon>Alcaligenaceae</taxon>
        <taxon>Bordetella</taxon>
    </lineage>
</organism>
<comment type="similarity">
    <text evidence="1">Belongs to the bacterial ribosomal protein bL33 family.</text>
</comment>
<dbReference type="EMBL" id="BX640447">
    <property type="protein sequence ID" value="CAE33864.1"/>
    <property type="molecule type" value="Genomic_DNA"/>
</dbReference>
<dbReference type="RefSeq" id="WP_003810296.1">
    <property type="nucleotide sequence ID" value="NC_002927.3"/>
</dbReference>
<dbReference type="SMR" id="Q7WH38"/>
<dbReference type="GeneID" id="94353576"/>
<dbReference type="KEGG" id="bbr:BB3372"/>
<dbReference type="eggNOG" id="COG0267">
    <property type="taxonomic scope" value="Bacteria"/>
</dbReference>
<dbReference type="HOGENOM" id="CLU_190949_1_1_4"/>
<dbReference type="Proteomes" id="UP000001027">
    <property type="component" value="Chromosome"/>
</dbReference>
<dbReference type="GO" id="GO:0022625">
    <property type="term" value="C:cytosolic large ribosomal subunit"/>
    <property type="evidence" value="ECO:0007669"/>
    <property type="project" value="TreeGrafter"/>
</dbReference>
<dbReference type="GO" id="GO:0003735">
    <property type="term" value="F:structural constituent of ribosome"/>
    <property type="evidence" value="ECO:0007669"/>
    <property type="project" value="InterPro"/>
</dbReference>
<dbReference type="GO" id="GO:0006412">
    <property type="term" value="P:translation"/>
    <property type="evidence" value="ECO:0007669"/>
    <property type="project" value="UniProtKB-UniRule"/>
</dbReference>
<dbReference type="FunFam" id="2.20.28.120:FF:000001">
    <property type="entry name" value="50S ribosomal protein L33"/>
    <property type="match status" value="1"/>
</dbReference>
<dbReference type="Gene3D" id="2.20.28.120">
    <property type="entry name" value="Ribosomal protein L33"/>
    <property type="match status" value="1"/>
</dbReference>
<dbReference type="HAMAP" id="MF_00294">
    <property type="entry name" value="Ribosomal_bL33"/>
    <property type="match status" value="1"/>
</dbReference>
<dbReference type="InterPro" id="IPR001705">
    <property type="entry name" value="Ribosomal_bL33"/>
</dbReference>
<dbReference type="InterPro" id="IPR038584">
    <property type="entry name" value="Ribosomal_bL33_sf"/>
</dbReference>
<dbReference type="InterPro" id="IPR011332">
    <property type="entry name" value="Ribosomal_zn-bd"/>
</dbReference>
<dbReference type="NCBIfam" id="NF001860">
    <property type="entry name" value="PRK00595.1"/>
    <property type="match status" value="1"/>
</dbReference>
<dbReference type="NCBIfam" id="TIGR01023">
    <property type="entry name" value="rpmG_bact"/>
    <property type="match status" value="1"/>
</dbReference>
<dbReference type="PANTHER" id="PTHR15238">
    <property type="entry name" value="54S RIBOSOMAL PROTEIN L39, MITOCHONDRIAL"/>
    <property type="match status" value="1"/>
</dbReference>
<dbReference type="PANTHER" id="PTHR15238:SF1">
    <property type="entry name" value="LARGE RIBOSOMAL SUBUNIT PROTEIN BL33M"/>
    <property type="match status" value="1"/>
</dbReference>
<dbReference type="Pfam" id="PF00471">
    <property type="entry name" value="Ribosomal_L33"/>
    <property type="match status" value="1"/>
</dbReference>
<dbReference type="SUPFAM" id="SSF57829">
    <property type="entry name" value="Zn-binding ribosomal proteins"/>
    <property type="match status" value="1"/>
</dbReference>
<gene>
    <name evidence="1" type="primary">rpmG</name>
    <name type="ordered locus">BB3372</name>
</gene>
<proteinExistence type="inferred from homology"/>
<protein>
    <recommendedName>
        <fullName evidence="1">Large ribosomal subunit protein bL33</fullName>
    </recommendedName>
    <alternativeName>
        <fullName evidence="2">50S ribosomal protein L33</fullName>
    </alternativeName>
</protein>
<feature type="chain" id="PRO_1000115096" description="Large ribosomal subunit protein bL33">
    <location>
        <begin position="1"/>
        <end position="55"/>
    </location>
</feature>
<evidence type="ECO:0000255" key="1">
    <source>
        <dbReference type="HAMAP-Rule" id="MF_00294"/>
    </source>
</evidence>
<evidence type="ECO:0000305" key="2"/>